<keyword id="KW-0067">ATP-binding</keyword>
<keyword id="KW-0119">Carbohydrate metabolism</keyword>
<keyword id="KW-0418">Kinase</keyword>
<keyword id="KW-0547">Nucleotide-binding</keyword>
<keyword id="KW-0808">Transferase</keyword>
<feature type="chain" id="PRO_1000067367" description="Anhydro-N-acetylmuramic acid kinase">
    <location>
        <begin position="1"/>
        <end position="369"/>
    </location>
</feature>
<feature type="binding site" evidence="1">
    <location>
        <begin position="12"/>
        <end position="19"/>
    </location>
    <ligand>
        <name>ATP</name>
        <dbReference type="ChEBI" id="CHEBI:30616"/>
    </ligand>
</feature>
<name>ANMK_SHESR</name>
<gene>
    <name evidence="1" type="primary">anmK</name>
    <name type="ordered locus">Shewmr7_2964</name>
</gene>
<reference key="1">
    <citation type="submission" date="2006-08" db="EMBL/GenBank/DDBJ databases">
        <title>Complete sequence of chromosome 1 of Shewanella sp. MR-7.</title>
        <authorList>
            <person name="Copeland A."/>
            <person name="Lucas S."/>
            <person name="Lapidus A."/>
            <person name="Barry K."/>
            <person name="Detter J.C."/>
            <person name="Glavina del Rio T."/>
            <person name="Hammon N."/>
            <person name="Israni S."/>
            <person name="Dalin E."/>
            <person name="Tice H."/>
            <person name="Pitluck S."/>
            <person name="Kiss H."/>
            <person name="Brettin T."/>
            <person name="Bruce D."/>
            <person name="Han C."/>
            <person name="Tapia R."/>
            <person name="Gilna P."/>
            <person name="Schmutz J."/>
            <person name="Larimer F."/>
            <person name="Land M."/>
            <person name="Hauser L."/>
            <person name="Kyrpides N."/>
            <person name="Mikhailova N."/>
            <person name="Nealson K."/>
            <person name="Konstantinidis K."/>
            <person name="Klappenbach J."/>
            <person name="Tiedje J."/>
            <person name="Richardson P."/>
        </authorList>
    </citation>
    <scope>NUCLEOTIDE SEQUENCE [LARGE SCALE GENOMIC DNA]</scope>
    <source>
        <strain>MR-7</strain>
    </source>
</reference>
<evidence type="ECO:0000255" key="1">
    <source>
        <dbReference type="HAMAP-Rule" id="MF_01270"/>
    </source>
</evidence>
<proteinExistence type="inferred from homology"/>
<sequence>MNKAYYIGLMSGTSMDGVDAVLVDFAGEQPQLIATHTEAIPSHLLKGLQRLCLPGNDEINRLGRLDRSVGKLFALAVNNLLAKAQIAKEDIIAIGSHGQTVRHMPNLEVGFTLQIGDPNTIATETGIDVIADFRRKDIALGGQGAPLVPAFHQQTFAQVGKKRVILNIGGIANITYLTGNREEVLGFDTGPGNTLIDAWIQQVKNEPYDKDGAWAASGNTDQQLLAQLLSHPYFSLAYPKSTGRELFNQAWLEQQLSEFNQLDEEDIQSTLLDLTCHSIARDILKLAPAGELFVCGGGAFNTELMQRLAALLPDYHLDTTSALGVDPKWAEGIAFAWLAMRHNLGLPANLPAVTGASREAVLGGRFSAK</sequence>
<dbReference type="EC" id="2.7.1.170" evidence="1"/>
<dbReference type="EMBL" id="CP000444">
    <property type="protein sequence ID" value="ABI43948.1"/>
    <property type="molecule type" value="Genomic_DNA"/>
</dbReference>
<dbReference type="SMR" id="Q0HSF7"/>
<dbReference type="KEGG" id="shm:Shewmr7_2964"/>
<dbReference type="HOGENOM" id="CLU_038782_0_0_6"/>
<dbReference type="UniPathway" id="UPA00343"/>
<dbReference type="UniPathway" id="UPA00544"/>
<dbReference type="GO" id="GO:0005524">
    <property type="term" value="F:ATP binding"/>
    <property type="evidence" value="ECO:0007669"/>
    <property type="project" value="UniProtKB-UniRule"/>
</dbReference>
<dbReference type="GO" id="GO:0016301">
    <property type="term" value="F:kinase activity"/>
    <property type="evidence" value="ECO:0007669"/>
    <property type="project" value="UniProtKB-KW"/>
</dbReference>
<dbReference type="GO" id="GO:0016773">
    <property type="term" value="F:phosphotransferase activity, alcohol group as acceptor"/>
    <property type="evidence" value="ECO:0007669"/>
    <property type="project" value="UniProtKB-UniRule"/>
</dbReference>
<dbReference type="GO" id="GO:0097175">
    <property type="term" value="P:1,6-anhydro-N-acetyl-beta-muramic acid catabolic process"/>
    <property type="evidence" value="ECO:0007669"/>
    <property type="project" value="UniProtKB-UniRule"/>
</dbReference>
<dbReference type="GO" id="GO:0006040">
    <property type="term" value="P:amino sugar metabolic process"/>
    <property type="evidence" value="ECO:0007669"/>
    <property type="project" value="InterPro"/>
</dbReference>
<dbReference type="GO" id="GO:0009254">
    <property type="term" value="P:peptidoglycan turnover"/>
    <property type="evidence" value="ECO:0007669"/>
    <property type="project" value="UniProtKB-UniRule"/>
</dbReference>
<dbReference type="CDD" id="cd24050">
    <property type="entry name" value="ASKHA_NBD_ANMK"/>
    <property type="match status" value="1"/>
</dbReference>
<dbReference type="Gene3D" id="3.30.420.40">
    <property type="match status" value="2"/>
</dbReference>
<dbReference type="HAMAP" id="MF_01270">
    <property type="entry name" value="AnhMurNAc_kinase"/>
    <property type="match status" value="1"/>
</dbReference>
<dbReference type="InterPro" id="IPR005338">
    <property type="entry name" value="Anhydro_N_Ac-Mur_kinase"/>
</dbReference>
<dbReference type="InterPro" id="IPR043129">
    <property type="entry name" value="ATPase_NBD"/>
</dbReference>
<dbReference type="NCBIfam" id="NF007139">
    <property type="entry name" value="PRK09585.1-3"/>
    <property type="match status" value="1"/>
</dbReference>
<dbReference type="NCBIfam" id="NF007148">
    <property type="entry name" value="PRK09585.3-2"/>
    <property type="match status" value="1"/>
</dbReference>
<dbReference type="PANTHER" id="PTHR30605">
    <property type="entry name" value="ANHYDRO-N-ACETYLMURAMIC ACID KINASE"/>
    <property type="match status" value="1"/>
</dbReference>
<dbReference type="PANTHER" id="PTHR30605:SF0">
    <property type="entry name" value="ANHYDRO-N-ACETYLMURAMIC ACID KINASE"/>
    <property type="match status" value="1"/>
</dbReference>
<dbReference type="Pfam" id="PF03702">
    <property type="entry name" value="AnmK"/>
    <property type="match status" value="1"/>
</dbReference>
<dbReference type="SUPFAM" id="SSF53067">
    <property type="entry name" value="Actin-like ATPase domain"/>
    <property type="match status" value="1"/>
</dbReference>
<accession>Q0HSF7</accession>
<organism>
    <name type="scientific">Shewanella sp. (strain MR-7)</name>
    <dbReference type="NCBI Taxonomy" id="60481"/>
    <lineage>
        <taxon>Bacteria</taxon>
        <taxon>Pseudomonadati</taxon>
        <taxon>Pseudomonadota</taxon>
        <taxon>Gammaproteobacteria</taxon>
        <taxon>Alteromonadales</taxon>
        <taxon>Shewanellaceae</taxon>
        <taxon>Shewanella</taxon>
    </lineage>
</organism>
<protein>
    <recommendedName>
        <fullName evidence="1">Anhydro-N-acetylmuramic acid kinase</fullName>
        <ecNumber evidence="1">2.7.1.170</ecNumber>
    </recommendedName>
    <alternativeName>
        <fullName evidence="1">AnhMurNAc kinase</fullName>
    </alternativeName>
</protein>
<comment type="function">
    <text evidence="1">Catalyzes the specific phosphorylation of 1,6-anhydro-N-acetylmuramic acid (anhMurNAc) with the simultaneous cleavage of the 1,6-anhydro ring, generating MurNAc-6-P. Is required for the utilization of anhMurNAc either imported from the medium or derived from its own cell wall murein, and thus plays a role in cell wall recycling.</text>
</comment>
<comment type="catalytic activity">
    <reaction evidence="1">
        <text>1,6-anhydro-N-acetyl-beta-muramate + ATP + H2O = N-acetyl-D-muramate 6-phosphate + ADP + H(+)</text>
        <dbReference type="Rhea" id="RHEA:24952"/>
        <dbReference type="ChEBI" id="CHEBI:15377"/>
        <dbReference type="ChEBI" id="CHEBI:15378"/>
        <dbReference type="ChEBI" id="CHEBI:30616"/>
        <dbReference type="ChEBI" id="CHEBI:58690"/>
        <dbReference type="ChEBI" id="CHEBI:58722"/>
        <dbReference type="ChEBI" id="CHEBI:456216"/>
        <dbReference type="EC" id="2.7.1.170"/>
    </reaction>
</comment>
<comment type="pathway">
    <text evidence="1">Amino-sugar metabolism; 1,6-anhydro-N-acetylmuramate degradation.</text>
</comment>
<comment type="pathway">
    <text evidence="1">Cell wall biogenesis; peptidoglycan recycling.</text>
</comment>
<comment type="similarity">
    <text evidence="1">Belongs to the anhydro-N-acetylmuramic acid kinase family.</text>
</comment>